<feature type="chain" id="PRO_1000070822" description="Cytochrome c-type biogenesis protein CcmE">
    <location>
        <begin position="1"/>
        <end position="159"/>
    </location>
</feature>
<feature type="topological domain" description="Cytoplasmic" evidence="1">
    <location>
        <begin position="1"/>
        <end position="8"/>
    </location>
</feature>
<feature type="transmembrane region" description="Helical; Signal-anchor for type II membrane protein" evidence="1">
    <location>
        <begin position="9"/>
        <end position="29"/>
    </location>
</feature>
<feature type="topological domain" description="Periplasmic" evidence="1">
    <location>
        <begin position="30"/>
        <end position="159"/>
    </location>
</feature>
<feature type="region of interest" description="Disordered" evidence="2">
    <location>
        <begin position="135"/>
        <end position="159"/>
    </location>
</feature>
<feature type="compositionally biased region" description="Basic and acidic residues" evidence="2">
    <location>
        <begin position="136"/>
        <end position="159"/>
    </location>
</feature>
<feature type="binding site" description="covalent" evidence="1">
    <location>
        <position position="124"/>
    </location>
    <ligand>
        <name>heme</name>
        <dbReference type="ChEBI" id="CHEBI:30413"/>
    </ligand>
</feature>
<feature type="binding site" description="axial binding residue" evidence="1">
    <location>
        <position position="128"/>
    </location>
    <ligand>
        <name>heme</name>
        <dbReference type="ChEBI" id="CHEBI:30413"/>
    </ligand>
    <ligandPart>
        <name>Fe</name>
        <dbReference type="ChEBI" id="CHEBI:18248"/>
    </ligandPart>
</feature>
<keyword id="KW-0997">Cell inner membrane</keyword>
<keyword id="KW-1003">Cell membrane</keyword>
<keyword id="KW-0201">Cytochrome c-type biogenesis</keyword>
<keyword id="KW-0349">Heme</keyword>
<keyword id="KW-0408">Iron</keyword>
<keyword id="KW-0472">Membrane</keyword>
<keyword id="KW-0479">Metal-binding</keyword>
<keyword id="KW-0735">Signal-anchor</keyword>
<keyword id="KW-0812">Transmembrane</keyword>
<keyword id="KW-1133">Transmembrane helix</keyword>
<protein>
    <recommendedName>
        <fullName evidence="1">Cytochrome c-type biogenesis protein CcmE</fullName>
    </recommendedName>
    <alternativeName>
        <fullName evidence="1">Cytochrome c maturation protein E</fullName>
    </alternativeName>
    <alternativeName>
        <fullName evidence="1">Heme chaperone CcmE</fullName>
    </alternativeName>
</protein>
<sequence length="159" mass="17263">MHPIRKKRLTIVLFLVAGIAIAVGLTTYALRQNINLFYDPTEIAAGNAPVDVRIRAGGMVEEGSVSRDTDSLKVNFRVTDYAASVPVQYEGILPDLFAEGQGVVAMGRLNEQGVFVADQVLAKHDENYMPPEVAEALERSSKGQHKSADVEKAAETTAY</sequence>
<gene>
    <name evidence="1" type="primary">ccmE</name>
    <name evidence="1" type="synonym">cycJ</name>
    <name type="ordered locus">Maqu_1956</name>
</gene>
<organism>
    <name type="scientific">Marinobacter nauticus (strain ATCC 700491 / DSM 11845 / VT8)</name>
    <name type="common">Marinobacter aquaeolei</name>
    <dbReference type="NCBI Taxonomy" id="351348"/>
    <lineage>
        <taxon>Bacteria</taxon>
        <taxon>Pseudomonadati</taxon>
        <taxon>Pseudomonadota</taxon>
        <taxon>Gammaproteobacteria</taxon>
        <taxon>Pseudomonadales</taxon>
        <taxon>Marinobacteraceae</taxon>
        <taxon>Marinobacter</taxon>
    </lineage>
</organism>
<name>CCME_MARN8</name>
<reference key="1">
    <citation type="journal article" date="2011" name="Appl. Environ. Microbiol.">
        <title>Genomic potential of Marinobacter aquaeolei, a biogeochemical 'opportunitroph'.</title>
        <authorList>
            <person name="Singer E."/>
            <person name="Webb E.A."/>
            <person name="Nelson W.C."/>
            <person name="Heidelberg J.F."/>
            <person name="Ivanova N."/>
            <person name="Pati A."/>
            <person name="Edwards K.J."/>
        </authorList>
    </citation>
    <scope>NUCLEOTIDE SEQUENCE [LARGE SCALE GENOMIC DNA]</scope>
    <source>
        <strain>ATCC 700491 / DSM 11845 / VT8</strain>
    </source>
</reference>
<evidence type="ECO:0000255" key="1">
    <source>
        <dbReference type="HAMAP-Rule" id="MF_01959"/>
    </source>
</evidence>
<evidence type="ECO:0000256" key="2">
    <source>
        <dbReference type="SAM" id="MobiDB-lite"/>
    </source>
</evidence>
<proteinExistence type="inferred from homology"/>
<comment type="function">
    <text evidence="1">Heme chaperone required for the biogenesis of c-type cytochromes. Transiently binds heme delivered by CcmC and transfers the heme to apo-cytochromes in a process facilitated by CcmF and CcmH.</text>
</comment>
<comment type="subcellular location">
    <subcellularLocation>
        <location evidence="1">Cell inner membrane</location>
        <topology evidence="1">Single-pass type II membrane protein</topology>
        <orientation evidence="1">Periplasmic side</orientation>
    </subcellularLocation>
</comment>
<comment type="similarity">
    <text evidence="1">Belongs to the CcmE/CycJ family.</text>
</comment>
<accession>A1U218</accession>
<dbReference type="EMBL" id="CP000514">
    <property type="protein sequence ID" value="ABM19037.1"/>
    <property type="molecule type" value="Genomic_DNA"/>
</dbReference>
<dbReference type="RefSeq" id="WP_011785430.1">
    <property type="nucleotide sequence ID" value="NC_008740.1"/>
</dbReference>
<dbReference type="SMR" id="A1U218"/>
<dbReference type="STRING" id="351348.Maqu_1956"/>
<dbReference type="KEGG" id="maq:Maqu_1956"/>
<dbReference type="eggNOG" id="COG2332">
    <property type="taxonomic scope" value="Bacteria"/>
</dbReference>
<dbReference type="HOGENOM" id="CLU_079503_1_1_6"/>
<dbReference type="OrthoDB" id="9793584at2"/>
<dbReference type="Proteomes" id="UP000000998">
    <property type="component" value="Chromosome"/>
</dbReference>
<dbReference type="GO" id="GO:0005886">
    <property type="term" value="C:plasma membrane"/>
    <property type="evidence" value="ECO:0007669"/>
    <property type="project" value="UniProtKB-SubCell"/>
</dbReference>
<dbReference type="GO" id="GO:0020037">
    <property type="term" value="F:heme binding"/>
    <property type="evidence" value="ECO:0007669"/>
    <property type="project" value="InterPro"/>
</dbReference>
<dbReference type="GO" id="GO:0046872">
    <property type="term" value="F:metal ion binding"/>
    <property type="evidence" value="ECO:0007669"/>
    <property type="project" value="UniProtKB-KW"/>
</dbReference>
<dbReference type="GO" id="GO:0017004">
    <property type="term" value="P:cytochrome complex assembly"/>
    <property type="evidence" value="ECO:0007669"/>
    <property type="project" value="UniProtKB-KW"/>
</dbReference>
<dbReference type="FunFam" id="2.40.50.140:FF:000104">
    <property type="entry name" value="Cytochrome c-type biogenesis protein CcmE"/>
    <property type="match status" value="1"/>
</dbReference>
<dbReference type="Gene3D" id="2.40.50.140">
    <property type="entry name" value="Nucleic acid-binding proteins"/>
    <property type="match status" value="1"/>
</dbReference>
<dbReference type="HAMAP" id="MF_01959">
    <property type="entry name" value="CcmE"/>
    <property type="match status" value="1"/>
</dbReference>
<dbReference type="InterPro" id="IPR004329">
    <property type="entry name" value="CcmE"/>
</dbReference>
<dbReference type="InterPro" id="IPR036127">
    <property type="entry name" value="CcmE-like_sf"/>
</dbReference>
<dbReference type="InterPro" id="IPR012340">
    <property type="entry name" value="NA-bd_OB-fold"/>
</dbReference>
<dbReference type="NCBIfam" id="NF009638">
    <property type="entry name" value="PRK13165.1"/>
    <property type="match status" value="1"/>
</dbReference>
<dbReference type="NCBIfam" id="NF009727">
    <property type="entry name" value="PRK13254.1-1"/>
    <property type="match status" value="1"/>
</dbReference>
<dbReference type="NCBIfam" id="NF009729">
    <property type="entry name" value="PRK13254.1-3"/>
    <property type="match status" value="1"/>
</dbReference>
<dbReference type="NCBIfam" id="NF009731">
    <property type="entry name" value="PRK13254.1-5"/>
    <property type="match status" value="1"/>
</dbReference>
<dbReference type="PANTHER" id="PTHR34128">
    <property type="entry name" value="CYTOCHROME C-TYPE BIOGENESIS PROTEIN CCME HOMOLOG, MITOCHONDRIAL"/>
    <property type="match status" value="1"/>
</dbReference>
<dbReference type="PANTHER" id="PTHR34128:SF2">
    <property type="entry name" value="CYTOCHROME C-TYPE BIOGENESIS PROTEIN CCME HOMOLOG, MITOCHONDRIAL"/>
    <property type="match status" value="1"/>
</dbReference>
<dbReference type="Pfam" id="PF03100">
    <property type="entry name" value="CcmE"/>
    <property type="match status" value="1"/>
</dbReference>
<dbReference type="SUPFAM" id="SSF82093">
    <property type="entry name" value="Heme chaperone CcmE"/>
    <property type="match status" value="1"/>
</dbReference>